<evidence type="ECO:0000255" key="1">
    <source>
        <dbReference type="HAMAP-Rule" id="MF_00753"/>
    </source>
</evidence>
<comment type="function">
    <text evidence="1">Conversion of glycerol 3-phosphate to dihydroxyacetone. Uses fumarate or nitrate as electron acceptor.</text>
</comment>
<comment type="catalytic activity">
    <reaction evidence="1">
        <text>a quinone + sn-glycerol 3-phosphate = dihydroxyacetone phosphate + a quinol</text>
        <dbReference type="Rhea" id="RHEA:18977"/>
        <dbReference type="ChEBI" id="CHEBI:24646"/>
        <dbReference type="ChEBI" id="CHEBI:57597"/>
        <dbReference type="ChEBI" id="CHEBI:57642"/>
        <dbReference type="ChEBI" id="CHEBI:132124"/>
        <dbReference type="EC" id="1.1.5.3"/>
    </reaction>
</comment>
<comment type="cofactor">
    <cofactor evidence="1">
        <name>FMN</name>
        <dbReference type="ChEBI" id="CHEBI:58210"/>
    </cofactor>
</comment>
<comment type="pathway">
    <text evidence="1">Polyol metabolism; glycerol degradation via glycerol kinase pathway; glycerone phosphate from sn-glycerol 3-phosphate (anaerobic route): step 1/1.</text>
</comment>
<comment type="subunit">
    <text evidence="1">Composed of a catalytic GlpA/B dimer and of membrane bound GlpC.</text>
</comment>
<comment type="similarity">
    <text evidence="1">Belongs to the anaerobic G-3-P dehydrogenase subunit B family.</text>
</comment>
<feature type="chain" id="PRO_1000148357" description="Anaerobic glycerol-3-phosphate dehydrogenase subunit B">
    <location>
        <begin position="1"/>
        <end position="419"/>
    </location>
</feature>
<keyword id="KW-0285">Flavoprotein</keyword>
<keyword id="KW-0288">FMN</keyword>
<keyword id="KW-0560">Oxidoreductase</keyword>
<keyword id="KW-1185">Reference proteome</keyword>
<reference key="1">
    <citation type="journal article" date="2009" name="J. Bacteriol.">
        <title>Complete genome sequence and comparative genome analysis of enteropathogenic Escherichia coli O127:H6 strain E2348/69.</title>
        <authorList>
            <person name="Iguchi A."/>
            <person name="Thomson N.R."/>
            <person name="Ogura Y."/>
            <person name="Saunders D."/>
            <person name="Ooka T."/>
            <person name="Henderson I.R."/>
            <person name="Harris D."/>
            <person name="Asadulghani M."/>
            <person name="Kurokawa K."/>
            <person name="Dean P."/>
            <person name="Kenny B."/>
            <person name="Quail M.A."/>
            <person name="Thurston S."/>
            <person name="Dougan G."/>
            <person name="Hayashi T."/>
            <person name="Parkhill J."/>
            <person name="Frankel G."/>
        </authorList>
    </citation>
    <scope>NUCLEOTIDE SEQUENCE [LARGE SCALE GENOMIC DNA]</scope>
    <source>
        <strain>E2348/69 / EPEC</strain>
    </source>
</reference>
<sequence length="419" mass="45379">MRFDTVIMGGGLAGLLCGLQLQKHGLRCAIVTRGQSALHFSSGSLDLLSHLPDGQPVTDIHSGLESLRQQAPAHPYTLLGPQRVLDLACQAQALIAESGAQLQGSVELAHQRITPLGTLRSTWLSSPEVPVWPLPAKKICVVGISGLMDFQAHLAAASLRELDLKVETAEIELPELDVLRNNATEFRAVNIARFLDNEENWPLLLDALIPVANTCEMILMPACFGLADDKLWHWLNEKLPCSLMLLPTLPPSVLGIRLQNQLQRQFVRQGGVWMPGDEVKKVTCKNGVVNEIWTRNHADIPLRPRFAVLASGSFFSGGLVAERNGIREPILGLDVLQTATRGEWYKGDFFAPQPWQQFGVTTDEALRPSQAGQTIENLFAIGSVLGGFDPIAQGCGGGVCAVSALHAAQQIAQRAGGQQ</sequence>
<name>GLPB_ECO27</name>
<protein>
    <recommendedName>
        <fullName evidence="1">Anaerobic glycerol-3-phosphate dehydrogenase subunit B</fullName>
        <shortName evidence="1">Anaerobic G-3-P dehydrogenase subunit B</shortName>
        <shortName evidence="1">Anaerobic G3Pdhase B</shortName>
        <ecNumber evidence="1">1.1.5.3</ecNumber>
    </recommendedName>
</protein>
<proteinExistence type="inferred from homology"/>
<accession>B7UFQ3</accession>
<dbReference type="EC" id="1.1.5.3" evidence="1"/>
<dbReference type="EMBL" id="FM180568">
    <property type="protein sequence ID" value="CAS09933.1"/>
    <property type="molecule type" value="Genomic_DNA"/>
</dbReference>
<dbReference type="RefSeq" id="WP_001209937.1">
    <property type="nucleotide sequence ID" value="NC_011601.1"/>
</dbReference>
<dbReference type="KEGG" id="ecg:E2348C_2385"/>
<dbReference type="HOGENOM" id="CLU_047793_0_0_6"/>
<dbReference type="UniPathway" id="UPA00618">
    <property type="reaction ID" value="UER00673"/>
</dbReference>
<dbReference type="Proteomes" id="UP000008205">
    <property type="component" value="Chromosome"/>
</dbReference>
<dbReference type="GO" id="GO:0009331">
    <property type="term" value="C:glycerol-3-phosphate dehydrogenase (FAD) complex"/>
    <property type="evidence" value="ECO:0007669"/>
    <property type="project" value="InterPro"/>
</dbReference>
<dbReference type="GO" id="GO:0004368">
    <property type="term" value="F:glycerol-3-phosphate dehydrogenase (quinone) activity"/>
    <property type="evidence" value="ECO:0007669"/>
    <property type="project" value="UniProtKB-UniRule"/>
</dbReference>
<dbReference type="GO" id="GO:0009061">
    <property type="term" value="P:anaerobic respiration"/>
    <property type="evidence" value="ECO:0007669"/>
    <property type="project" value="TreeGrafter"/>
</dbReference>
<dbReference type="GO" id="GO:0019563">
    <property type="term" value="P:glycerol catabolic process"/>
    <property type="evidence" value="ECO:0007669"/>
    <property type="project" value="UniProtKB-UniRule"/>
</dbReference>
<dbReference type="GO" id="GO:0046168">
    <property type="term" value="P:glycerol-3-phosphate catabolic process"/>
    <property type="evidence" value="ECO:0007669"/>
    <property type="project" value="TreeGrafter"/>
</dbReference>
<dbReference type="Gene3D" id="3.50.50.60">
    <property type="entry name" value="FAD/NAD(P)-binding domain"/>
    <property type="match status" value="1"/>
</dbReference>
<dbReference type="HAMAP" id="MF_00753">
    <property type="entry name" value="Glycerol3P_GlpB"/>
    <property type="match status" value="1"/>
</dbReference>
<dbReference type="InterPro" id="IPR003953">
    <property type="entry name" value="FAD-dep_OxRdtase_2_FAD-bd"/>
</dbReference>
<dbReference type="InterPro" id="IPR050315">
    <property type="entry name" value="FAD-oxidoreductase_2"/>
</dbReference>
<dbReference type="InterPro" id="IPR036188">
    <property type="entry name" value="FAD/NAD-bd_sf"/>
</dbReference>
<dbReference type="InterPro" id="IPR009158">
    <property type="entry name" value="G3P_DH_GlpB_su"/>
</dbReference>
<dbReference type="NCBIfam" id="TIGR03378">
    <property type="entry name" value="glycerol3P_GlpB"/>
    <property type="match status" value="1"/>
</dbReference>
<dbReference type="NCBIfam" id="NF003718">
    <property type="entry name" value="PRK05329.1-1"/>
    <property type="match status" value="1"/>
</dbReference>
<dbReference type="NCBIfam" id="NF003719">
    <property type="entry name" value="PRK05329.1-2"/>
    <property type="match status" value="1"/>
</dbReference>
<dbReference type="NCBIfam" id="NF003720">
    <property type="entry name" value="PRK05329.1-3"/>
    <property type="match status" value="1"/>
</dbReference>
<dbReference type="NCBIfam" id="NF003721">
    <property type="entry name" value="PRK05329.1-4"/>
    <property type="match status" value="1"/>
</dbReference>
<dbReference type="PANTHER" id="PTHR43400:SF11">
    <property type="entry name" value="ANAEROBIC GLYCEROL-3-PHOSPHATE DEHYDROGENASE SUBUNIT B"/>
    <property type="match status" value="1"/>
</dbReference>
<dbReference type="PANTHER" id="PTHR43400">
    <property type="entry name" value="FUMARATE REDUCTASE"/>
    <property type="match status" value="1"/>
</dbReference>
<dbReference type="Pfam" id="PF00890">
    <property type="entry name" value="FAD_binding_2"/>
    <property type="match status" value="1"/>
</dbReference>
<dbReference type="PIRSF" id="PIRSF000141">
    <property type="entry name" value="Anaerobic_G3P_dh"/>
    <property type="match status" value="1"/>
</dbReference>
<dbReference type="SUPFAM" id="SSF51905">
    <property type="entry name" value="FAD/NAD(P)-binding domain"/>
    <property type="match status" value="1"/>
</dbReference>
<organism>
    <name type="scientific">Escherichia coli O127:H6 (strain E2348/69 / EPEC)</name>
    <dbReference type="NCBI Taxonomy" id="574521"/>
    <lineage>
        <taxon>Bacteria</taxon>
        <taxon>Pseudomonadati</taxon>
        <taxon>Pseudomonadota</taxon>
        <taxon>Gammaproteobacteria</taxon>
        <taxon>Enterobacterales</taxon>
        <taxon>Enterobacteriaceae</taxon>
        <taxon>Escherichia</taxon>
    </lineage>
</organism>
<gene>
    <name evidence="1" type="primary">glpB</name>
    <name type="ordered locus">E2348C_2385</name>
</gene>